<dbReference type="EMBL" id="AF216664">
    <property type="protein sequence ID" value="AAF23814.1"/>
    <property type="molecule type" value="Genomic_DNA"/>
</dbReference>
<dbReference type="EMBL" id="AF216664">
    <property type="protein sequence ID" value="AAF23815.1"/>
    <property type="molecule type" value="Genomic_DNA"/>
</dbReference>
<dbReference type="EMBL" id="AE014298">
    <property type="protein sequence ID" value="AAF48702.2"/>
    <property type="molecule type" value="Genomic_DNA"/>
</dbReference>
<dbReference type="EMBL" id="AE014298">
    <property type="protein sequence ID" value="AAN09434.1"/>
    <property type="molecule type" value="Genomic_DNA"/>
</dbReference>
<dbReference type="EMBL" id="AE014298">
    <property type="protein sequence ID" value="QCD25243.1"/>
    <property type="molecule type" value="Genomic_DNA"/>
</dbReference>
<dbReference type="EMBL" id="AY128417">
    <property type="protein sequence ID" value="AAM75010.1"/>
    <property type="molecule type" value="mRNA"/>
</dbReference>
<dbReference type="EMBL" id="BT099943">
    <property type="protein sequence ID" value="ACX36519.1"/>
    <property type="status" value="ALT_INIT"/>
    <property type="molecule type" value="mRNA"/>
</dbReference>
<dbReference type="EMBL" id="BT100125">
    <property type="protein sequence ID" value="ACX85646.1"/>
    <property type="status" value="ALT_INIT"/>
    <property type="molecule type" value="mRNA"/>
</dbReference>
<dbReference type="EMBL" id="BT133110">
    <property type="protein sequence ID" value="AEX98030.1"/>
    <property type="status" value="ALT_INIT"/>
    <property type="molecule type" value="mRNA"/>
</dbReference>
<dbReference type="RefSeq" id="NP_001356948.1">
    <molecule id="Q9U3V9-2"/>
    <property type="nucleotide sequence ID" value="NM_001370033.1"/>
</dbReference>
<dbReference type="RefSeq" id="NP_524773.2">
    <molecule id="Q9U3V9-3"/>
    <property type="nucleotide sequence ID" value="NM_080034.3"/>
</dbReference>
<dbReference type="RefSeq" id="NP_728054.1">
    <molecule id="Q9U3V9-1"/>
    <property type="nucleotide sequence ID" value="NM_167558.2"/>
</dbReference>
<dbReference type="SMR" id="Q9U3V9"/>
<dbReference type="BioGRID" id="68935">
    <property type="interactions" value="20"/>
</dbReference>
<dbReference type="ComplexPortal" id="CPX-2263">
    <property type="entry name" value="TREX-2 transcription-export complex"/>
</dbReference>
<dbReference type="FunCoup" id="Q9U3V9">
    <property type="interactions" value="220"/>
</dbReference>
<dbReference type="IntAct" id="Q9U3V9">
    <property type="interactions" value="5"/>
</dbReference>
<dbReference type="MINT" id="Q9U3V9"/>
<dbReference type="STRING" id="7227.FBpp0423201"/>
<dbReference type="PaxDb" id="7227-FBpp0074178"/>
<dbReference type="ABCD" id="Q9U3V9">
    <property type="antibodies" value="2 sequenced antibodies"/>
</dbReference>
<dbReference type="EnsemblMetazoa" id="FBtr0474622">
    <molecule id="Q9U3V9-1"/>
    <property type="protein sequence ID" value="FBpp0423199"/>
    <property type="gene ID" value="FBgn0286809"/>
</dbReference>
<dbReference type="EnsemblMetazoa" id="FBtr0474623">
    <molecule id="Q9U3V9-3"/>
    <property type="protein sequence ID" value="FBpp0423200"/>
    <property type="gene ID" value="FBgn0286809"/>
</dbReference>
<dbReference type="EnsemblMetazoa" id="FBtr0474624">
    <molecule id="Q9U3V9-2"/>
    <property type="protein sequence ID" value="FBpp0423201"/>
    <property type="gene ID" value="FBgn0286809"/>
</dbReference>
<dbReference type="GeneID" id="44271"/>
<dbReference type="KEGG" id="dme:Dmel_CG46386"/>
<dbReference type="UCSC" id="CG32562-RA">
    <molecule id="Q9U3V9-2"/>
    <property type="organism name" value="d. melanogaster"/>
</dbReference>
<dbReference type="AGR" id="FB:FBgn0286809"/>
<dbReference type="CTD" id="44271"/>
<dbReference type="FlyBase" id="FBgn0286809">
    <property type="gene designation" value="xmas"/>
</dbReference>
<dbReference type="VEuPathDB" id="VectorBase:FBgn0286809"/>
<dbReference type="eggNOG" id="KOG1860">
    <property type="taxonomic scope" value="Eukaryota"/>
</dbReference>
<dbReference type="HOGENOM" id="CLU_003138_0_0_1"/>
<dbReference type="InParanoid" id="Q9U3V9"/>
<dbReference type="OMA" id="RPHNSFN"/>
<dbReference type="OrthoDB" id="21502at2759"/>
<dbReference type="PhylomeDB" id="Q9U3V9"/>
<dbReference type="BioGRID-ORCS" id="44271">
    <property type="hits" value="1 hit in 1 CRISPR screen"/>
</dbReference>
<dbReference type="BioGRID-ORCS" id="44660">
    <property type="hits" value="0 hits in 1 CRISPR screen"/>
</dbReference>
<dbReference type="GenomeRNAi" id="44271"/>
<dbReference type="PRO" id="PR:Q9U3V9"/>
<dbReference type="Proteomes" id="UP000000803">
    <property type="component" value="Chromosome X"/>
</dbReference>
<dbReference type="Bgee" id="FBgn0286809">
    <property type="expression patterns" value="Expressed in early elongation stage spermatid (Drosophila) in testis and 59 other cell types or tissues"/>
</dbReference>
<dbReference type="ExpressionAtlas" id="Q9U3V9">
    <property type="expression patterns" value="baseline and differential"/>
</dbReference>
<dbReference type="GO" id="GO:0005737">
    <property type="term" value="C:cytoplasm"/>
    <property type="evidence" value="ECO:0000318"/>
    <property type="project" value="GO_Central"/>
</dbReference>
<dbReference type="GO" id="GO:0031965">
    <property type="term" value="C:nuclear membrane"/>
    <property type="evidence" value="ECO:0007669"/>
    <property type="project" value="UniProtKB-SubCell"/>
</dbReference>
<dbReference type="GO" id="GO:0034399">
    <property type="term" value="C:nuclear periphery"/>
    <property type="evidence" value="ECO:0000314"/>
    <property type="project" value="FlyBase"/>
</dbReference>
<dbReference type="GO" id="GO:0005643">
    <property type="term" value="C:nuclear pore"/>
    <property type="evidence" value="ECO:0000314"/>
    <property type="project" value="UniProtKB"/>
</dbReference>
<dbReference type="GO" id="GO:0005654">
    <property type="term" value="C:nucleoplasm"/>
    <property type="evidence" value="ECO:0007669"/>
    <property type="project" value="UniProtKB-SubCell"/>
</dbReference>
<dbReference type="GO" id="GO:0005634">
    <property type="term" value="C:nucleus"/>
    <property type="evidence" value="ECO:0000314"/>
    <property type="project" value="UniProtKB"/>
</dbReference>
<dbReference type="GO" id="GO:0070390">
    <property type="term" value="C:transcription export complex 2"/>
    <property type="evidence" value="ECO:0000314"/>
    <property type="project" value="FlyBase"/>
</dbReference>
<dbReference type="GO" id="GO:0043021">
    <property type="term" value="F:ribonucleoprotein complex binding"/>
    <property type="evidence" value="ECO:0000314"/>
    <property type="project" value="UniProtKB"/>
</dbReference>
<dbReference type="GO" id="GO:0003723">
    <property type="term" value="F:RNA binding"/>
    <property type="evidence" value="ECO:0007669"/>
    <property type="project" value="UniProtKB-KW"/>
</dbReference>
<dbReference type="GO" id="GO:0006406">
    <property type="term" value="P:mRNA export from nucleus"/>
    <property type="evidence" value="ECO:0000314"/>
    <property type="project" value="FlyBase"/>
</dbReference>
<dbReference type="GO" id="GO:0048477">
    <property type="term" value="P:oogenesis"/>
    <property type="evidence" value="ECO:0007669"/>
    <property type="project" value="UniProtKB-KW"/>
</dbReference>
<dbReference type="GO" id="GO:0016973">
    <property type="term" value="P:poly(A)+ mRNA export from nucleus"/>
    <property type="evidence" value="ECO:0000315"/>
    <property type="project" value="FlyBase"/>
</dbReference>
<dbReference type="GO" id="GO:0045944">
    <property type="term" value="P:positive regulation of transcription by RNA polymerase II"/>
    <property type="evidence" value="ECO:0000315"/>
    <property type="project" value="UniProtKB"/>
</dbReference>
<dbReference type="GO" id="GO:0007283">
    <property type="term" value="P:spermatogenesis"/>
    <property type="evidence" value="ECO:0007669"/>
    <property type="project" value="UniProtKB-KW"/>
</dbReference>
<dbReference type="CDD" id="cd12457">
    <property type="entry name" value="RRM_XMAS2"/>
    <property type="match status" value="1"/>
</dbReference>
<dbReference type="FunFam" id="1.25.40.990:FF:000033">
    <property type="entry name" value="protein xmas-2"/>
    <property type="match status" value="1"/>
</dbReference>
<dbReference type="Gene3D" id="1.25.40.990">
    <property type="match status" value="1"/>
</dbReference>
<dbReference type="Gene3D" id="3.30.70.330">
    <property type="match status" value="1"/>
</dbReference>
<dbReference type="InterPro" id="IPR012677">
    <property type="entry name" value="Nucleotide-bd_a/b_plait_sf"/>
</dbReference>
<dbReference type="InterPro" id="IPR000717">
    <property type="entry name" value="PCI_dom"/>
</dbReference>
<dbReference type="InterPro" id="IPR035979">
    <property type="entry name" value="RBD_domain_sf"/>
</dbReference>
<dbReference type="InterPro" id="IPR000504">
    <property type="entry name" value="RRM_dom"/>
</dbReference>
<dbReference type="InterPro" id="IPR045107">
    <property type="entry name" value="SAC3/GANP/THP3"/>
</dbReference>
<dbReference type="InterPro" id="IPR005062">
    <property type="entry name" value="SAC3/GANP/THP3_conserved"/>
</dbReference>
<dbReference type="InterPro" id="IPR034366">
    <property type="entry name" value="XMAS_RRM"/>
</dbReference>
<dbReference type="PANTHER" id="PTHR12436">
    <property type="entry name" value="80 KDA MCM3-ASSOCIATED PROTEIN"/>
    <property type="match status" value="1"/>
</dbReference>
<dbReference type="PANTHER" id="PTHR12436:SF3">
    <property type="entry name" value="GERMINAL-CENTER ASSOCIATED NUCLEAR PROTEIN"/>
    <property type="match status" value="1"/>
</dbReference>
<dbReference type="Pfam" id="PF03399">
    <property type="entry name" value="SAC3_GANP"/>
    <property type="match status" value="1"/>
</dbReference>
<dbReference type="SUPFAM" id="SSF54928">
    <property type="entry name" value="RNA-binding domain, RBD"/>
    <property type="match status" value="1"/>
</dbReference>
<dbReference type="PROSITE" id="PS50250">
    <property type="entry name" value="PCI"/>
    <property type="match status" value="1"/>
</dbReference>
<dbReference type="PROSITE" id="PS50102">
    <property type="entry name" value="RRM"/>
    <property type="match status" value="1"/>
</dbReference>
<comment type="function">
    <text evidence="4 5 8">Involved in mRNA export and mRNA coupled transcription activation (PubMed:18034162, PubMed:27016737, PubMed:33602059). Component of the nuclear pore complex (NPC)-associated TREX-2/AMEX complex (anchoring and mRNA export complex) which functions in docking export-competent ribonucleoprotein particles (mRNPs) to the nuclear entrance of the nuclear pore complex (nuclear basket), thereby enabling the export of mRNAs to the cytoplasm through the nuclear pores (PubMed:18034162, PubMed:27016737). The TREX-2/AMEX complex also functions with the transcriptional coactivator SAGA/TFTC complex, to anchor a subset of transcription sites to the nuclear pore complex basket in order to achieve efficient transcription and export of their resulting mRNAs (PubMed:18034162). Within the complex, required for localization of e(y)2 to the nuclear periphery (PubMed:18034162).</text>
</comment>
<comment type="subunit">
    <text evidence="4 5 6 9 10">Component of the nuclear pore complex (NPC)-associated TREX-2/AMEX complex (anchoring and mRNA export complex), composed of e(y)2, xmas and PCID2 (PubMed:18034162, PubMed:27016737). Within the TREX-2/ AMEX complex, interactions with e(y)2 is required for localization of e(y)2 to the nuclear periphery (PubMed:18034162, Ref.7). Interaction between the TREX-2/AMEX complex and the ORC complex is required for ORC localization to mRNPs, and consequently mRNA export (PubMed:27016737, PubMed:33689068). Within the TREX-2/AMEX-ORC complex, interacts with Orc6, (via C-terminus) with Orc3, and weakly interacts with Orc4 (PubMed:27016737, PubMed:33689068). However, another report found that the interaction with Orc3 is not direct, instead it is mediated via e(y)2 (Ref.7). Interacts with piwi (PubMed:28472469).</text>
</comment>
<comment type="interaction">
    <interactant intactId="EBI-2550689">
        <id>Q9U3V9</id>
    </interactant>
    <interactant intactId="EBI-2549759">
        <id>Q9VYX1</id>
        <label>e(y)2</label>
    </interactant>
    <organismsDiffer>false</organismsDiffer>
    <experiments>5</experiments>
</comment>
<comment type="subcellular location">
    <subcellularLocation>
        <location evidence="6">Nucleus</location>
        <location evidence="6">Nucleoplasm</location>
    </subcellularLocation>
    <subcellularLocation>
        <location evidence="7 10">Nucleus</location>
    </subcellularLocation>
    <subcellularLocation>
        <location evidence="4 5 6 8">Nucleus membrane</location>
        <topology evidence="4 5 6 8">Peripheral membrane protein</topology>
    </subcellularLocation>
    <subcellularLocation>
        <location evidence="8">Cytoplasm</location>
    </subcellularLocation>
    <text evidence="4 5">Localizes to nuclear periphery, often in contact with the nuclear pore complex (NPC).</text>
</comment>
<comment type="alternative products">
    <event type="alternative splicing"/>
    <isoform>
        <id>Q9U3V9-2</id>
        <name evidence="18">C</name>
        <name evidence="11">xmas</name>
        <sequence type="displayed"/>
    </isoform>
    <isoform>
        <id>Q9U3V9-1</id>
        <name evidence="18">A</name>
        <name evidence="11">xmas-2</name>
        <sequence type="described" ref="VSP_061531 VSP_061532"/>
    </isoform>
    <isoform>
        <id>Q9U3V9-3</id>
        <name evidence="18">B</name>
        <name evidence="11">xmas-1</name>
        <sequence type="described" ref="VSP_061530"/>
    </isoform>
</comment>
<comment type="tissue specificity">
    <text evidence="6">Expressed in ovaries (at protein level).</text>
</comment>
<comment type="tissue specificity">
    <molecule>Isoform C</molecule>
    <text evidence="7">Detected in the testes and ovaries, with expression levels higher in oocytes than in testicular cells (at protein level).</text>
</comment>
<comment type="tissue specificity">
    <molecule>Isoform A</molecule>
    <text evidence="7">Detected in the testes and ovaries (at protein level).</text>
</comment>
<comment type="tissue specificity">
    <molecule>Isoform B</molecule>
    <text evidence="7">Detected in the testes.</text>
</comment>
<comment type="developmental stage">
    <text evidence="4 5">Detected in embryos (at protein level).</text>
</comment>
<comment type="developmental stage">
    <molecule>Isoform C</molecule>
    <text evidence="7">Not detected in embryos (at protein level).</text>
</comment>
<comment type="developmental stage">
    <molecule>Isoform A</molecule>
    <text evidence="7">Detected in embryos (at protein level).</text>
</comment>
<comment type="similarity">
    <text evidence="13">Belongs to the SAC3 family.</text>
</comment>
<comment type="caution">
    <text evidence="7 14">Isoform A (xmas-2) and isoform B (xmas-1) were originally thought to be separate genes until a third longer transcript, isoform C, was identified that encompasses both ORFs and supports their existence as three alternatively spliced isoforms (PubMed:29779104). Although most of the functional information for this protein is attributed to isoform A/xmas-2 in the literature, it might also be relevant for isoform C and isoform B/xmas-1.</text>
</comment>
<comment type="sequence caution" evidence="13">
    <conflict type="erroneous initiation">
        <sequence resource="EMBL-CDS" id="ACX36519"/>
    </conflict>
    <text>Extended N-terminus.</text>
</comment>
<comment type="sequence caution" evidence="13">
    <conflict type="erroneous initiation">
        <sequence resource="EMBL-CDS" id="ACX85646"/>
    </conflict>
    <text>Extended N-terminus.</text>
</comment>
<comment type="sequence caution" evidence="13">
    <conflict type="erroneous initiation">
        <sequence resource="EMBL-CDS" id="AEX98030"/>
    </conflict>
    <text>Extended N-terminus.</text>
</comment>
<gene>
    <name evidence="11 18" type="primary">xmas</name>
    <name evidence="11 18" type="synonym">xmas-1</name>
    <name evidence="11 18" type="synonym">xmas-2</name>
    <name evidence="18" type="ORF">CG46386</name>
</gene>
<keyword id="KW-0025">Alternative splicing</keyword>
<keyword id="KW-0963">Cytoplasm</keyword>
<keyword id="KW-0217">Developmental protein</keyword>
<keyword id="KW-0221">Differentiation</keyword>
<keyword id="KW-0472">Membrane</keyword>
<keyword id="KW-0509">mRNA transport</keyword>
<keyword id="KW-0539">Nucleus</keyword>
<keyword id="KW-0896">Oogenesis</keyword>
<keyword id="KW-1185">Reference proteome</keyword>
<keyword id="KW-0694">RNA-binding</keyword>
<keyword id="KW-0744">Spermatogenesis</keyword>
<keyword id="KW-0813">Transport</keyword>
<reference key="1">
    <citation type="submission" date="1999-12" db="EMBL/GenBank/DDBJ databases">
        <title>Two overlapping genes, xmas-1 and xmas-2, are required for spermatogenesis, oogenesis and embryogenesis.</title>
        <authorList>
            <person name="Xu E.Y."/>
            <person name="Kaufman T.C."/>
            <person name="Wu C."/>
        </authorList>
    </citation>
    <scope>NUCLEOTIDE SEQUENCE [GENOMIC DNA] (ISOFORMS A AND B)</scope>
</reference>
<reference key="2">
    <citation type="journal article" date="2000" name="Science">
        <title>The genome sequence of Drosophila melanogaster.</title>
        <authorList>
            <person name="Adams M.D."/>
            <person name="Celniker S.E."/>
            <person name="Holt R.A."/>
            <person name="Evans C.A."/>
            <person name="Gocayne J.D."/>
            <person name="Amanatides P.G."/>
            <person name="Scherer S.E."/>
            <person name="Li P.W."/>
            <person name="Hoskins R.A."/>
            <person name="Galle R.F."/>
            <person name="George R.A."/>
            <person name="Lewis S.E."/>
            <person name="Richards S."/>
            <person name="Ashburner M."/>
            <person name="Henderson S.N."/>
            <person name="Sutton G.G."/>
            <person name="Wortman J.R."/>
            <person name="Yandell M.D."/>
            <person name="Zhang Q."/>
            <person name="Chen L.X."/>
            <person name="Brandon R.C."/>
            <person name="Rogers Y.-H.C."/>
            <person name="Blazej R.G."/>
            <person name="Champe M."/>
            <person name="Pfeiffer B.D."/>
            <person name="Wan K.H."/>
            <person name="Doyle C."/>
            <person name="Baxter E.G."/>
            <person name="Helt G."/>
            <person name="Nelson C.R."/>
            <person name="Miklos G.L.G."/>
            <person name="Abril J.F."/>
            <person name="Agbayani A."/>
            <person name="An H.-J."/>
            <person name="Andrews-Pfannkoch C."/>
            <person name="Baldwin D."/>
            <person name="Ballew R.M."/>
            <person name="Basu A."/>
            <person name="Baxendale J."/>
            <person name="Bayraktaroglu L."/>
            <person name="Beasley E.M."/>
            <person name="Beeson K.Y."/>
            <person name="Benos P.V."/>
            <person name="Berman B.P."/>
            <person name="Bhandari D."/>
            <person name="Bolshakov S."/>
            <person name="Borkova D."/>
            <person name="Botchan M.R."/>
            <person name="Bouck J."/>
            <person name="Brokstein P."/>
            <person name="Brottier P."/>
            <person name="Burtis K.C."/>
            <person name="Busam D.A."/>
            <person name="Butler H."/>
            <person name="Cadieu E."/>
            <person name="Center A."/>
            <person name="Chandra I."/>
            <person name="Cherry J.M."/>
            <person name="Cawley S."/>
            <person name="Dahlke C."/>
            <person name="Davenport L.B."/>
            <person name="Davies P."/>
            <person name="de Pablos B."/>
            <person name="Delcher A."/>
            <person name="Deng Z."/>
            <person name="Mays A.D."/>
            <person name="Dew I."/>
            <person name="Dietz S.M."/>
            <person name="Dodson K."/>
            <person name="Doup L.E."/>
            <person name="Downes M."/>
            <person name="Dugan-Rocha S."/>
            <person name="Dunkov B.C."/>
            <person name="Dunn P."/>
            <person name="Durbin K.J."/>
            <person name="Evangelista C.C."/>
            <person name="Ferraz C."/>
            <person name="Ferriera S."/>
            <person name="Fleischmann W."/>
            <person name="Fosler C."/>
            <person name="Gabrielian A.E."/>
            <person name="Garg N.S."/>
            <person name="Gelbart W.M."/>
            <person name="Glasser K."/>
            <person name="Glodek A."/>
            <person name="Gong F."/>
            <person name="Gorrell J.H."/>
            <person name="Gu Z."/>
            <person name="Guan P."/>
            <person name="Harris M."/>
            <person name="Harris N.L."/>
            <person name="Harvey D.A."/>
            <person name="Heiman T.J."/>
            <person name="Hernandez J.R."/>
            <person name="Houck J."/>
            <person name="Hostin D."/>
            <person name="Houston K.A."/>
            <person name="Howland T.J."/>
            <person name="Wei M.-H."/>
            <person name="Ibegwam C."/>
            <person name="Jalali M."/>
            <person name="Kalush F."/>
            <person name="Karpen G.H."/>
            <person name="Ke Z."/>
            <person name="Kennison J.A."/>
            <person name="Ketchum K.A."/>
            <person name="Kimmel B.E."/>
            <person name="Kodira C.D."/>
            <person name="Kraft C.L."/>
            <person name="Kravitz S."/>
            <person name="Kulp D."/>
            <person name="Lai Z."/>
            <person name="Lasko P."/>
            <person name="Lei Y."/>
            <person name="Levitsky A.A."/>
            <person name="Li J.H."/>
            <person name="Li Z."/>
            <person name="Liang Y."/>
            <person name="Lin X."/>
            <person name="Liu X."/>
            <person name="Mattei B."/>
            <person name="McIntosh T.C."/>
            <person name="McLeod M.P."/>
            <person name="McPherson D."/>
            <person name="Merkulov G."/>
            <person name="Milshina N.V."/>
            <person name="Mobarry C."/>
            <person name="Morris J."/>
            <person name="Moshrefi A."/>
            <person name="Mount S.M."/>
            <person name="Moy M."/>
            <person name="Murphy B."/>
            <person name="Murphy L."/>
            <person name="Muzny D.M."/>
            <person name="Nelson D.L."/>
            <person name="Nelson D.R."/>
            <person name="Nelson K.A."/>
            <person name="Nixon K."/>
            <person name="Nusskern D.R."/>
            <person name="Pacleb J.M."/>
            <person name="Palazzolo M."/>
            <person name="Pittman G.S."/>
            <person name="Pan S."/>
            <person name="Pollard J."/>
            <person name="Puri V."/>
            <person name="Reese M.G."/>
            <person name="Reinert K."/>
            <person name="Remington K."/>
            <person name="Saunders R.D.C."/>
            <person name="Scheeler F."/>
            <person name="Shen H."/>
            <person name="Shue B.C."/>
            <person name="Siden-Kiamos I."/>
            <person name="Simpson M."/>
            <person name="Skupski M.P."/>
            <person name="Smith T.J."/>
            <person name="Spier E."/>
            <person name="Spradling A.C."/>
            <person name="Stapleton M."/>
            <person name="Strong R."/>
            <person name="Sun E."/>
            <person name="Svirskas R."/>
            <person name="Tector C."/>
            <person name="Turner R."/>
            <person name="Venter E."/>
            <person name="Wang A.H."/>
            <person name="Wang X."/>
            <person name="Wang Z.-Y."/>
            <person name="Wassarman D.A."/>
            <person name="Weinstock G.M."/>
            <person name="Weissenbach J."/>
            <person name="Williams S.M."/>
            <person name="Woodage T."/>
            <person name="Worley K.C."/>
            <person name="Wu D."/>
            <person name="Yang S."/>
            <person name="Yao Q.A."/>
            <person name="Ye J."/>
            <person name="Yeh R.-F."/>
            <person name="Zaveri J.S."/>
            <person name="Zhan M."/>
            <person name="Zhang G."/>
            <person name="Zhao Q."/>
            <person name="Zheng L."/>
            <person name="Zheng X.H."/>
            <person name="Zhong F.N."/>
            <person name="Zhong W."/>
            <person name="Zhou X."/>
            <person name="Zhu S.C."/>
            <person name="Zhu X."/>
            <person name="Smith H.O."/>
            <person name="Gibbs R.A."/>
            <person name="Myers E.W."/>
            <person name="Rubin G.M."/>
            <person name="Venter J.C."/>
        </authorList>
    </citation>
    <scope>NUCLEOTIDE SEQUENCE [LARGE SCALE GENOMIC DNA]</scope>
    <source>
        <strain>Berkeley</strain>
    </source>
</reference>
<reference key="3">
    <citation type="journal article" date="2002" name="Genome Biol.">
        <title>Annotation of the Drosophila melanogaster euchromatic genome: a systematic review.</title>
        <authorList>
            <person name="Misra S."/>
            <person name="Crosby M.A."/>
            <person name="Mungall C.J."/>
            <person name="Matthews B.B."/>
            <person name="Campbell K.S."/>
            <person name="Hradecky P."/>
            <person name="Huang Y."/>
            <person name="Kaminker J.S."/>
            <person name="Millburn G.H."/>
            <person name="Prochnik S.E."/>
            <person name="Smith C.D."/>
            <person name="Tupy J.L."/>
            <person name="Whitfield E.J."/>
            <person name="Bayraktaroglu L."/>
            <person name="Berman B.P."/>
            <person name="Bettencourt B.R."/>
            <person name="Celniker S.E."/>
            <person name="de Grey A.D.N.J."/>
            <person name="Drysdale R.A."/>
            <person name="Harris N.L."/>
            <person name="Richter J."/>
            <person name="Russo S."/>
            <person name="Schroeder A.J."/>
            <person name="Shu S.Q."/>
            <person name="Stapleton M."/>
            <person name="Yamada C."/>
            <person name="Ashburner M."/>
            <person name="Gelbart W.M."/>
            <person name="Rubin G.M."/>
            <person name="Lewis S.E."/>
        </authorList>
    </citation>
    <scope>GENOME REANNOTATION</scope>
    <source>
        <strain>Berkeley</strain>
    </source>
</reference>
<reference key="4">
    <citation type="journal article" date="2002" name="Genome Biol.">
        <title>A Drosophila full-length cDNA resource.</title>
        <authorList>
            <person name="Stapleton M."/>
            <person name="Carlson J.W."/>
            <person name="Brokstein P."/>
            <person name="Yu C."/>
            <person name="Champe M."/>
            <person name="George R.A."/>
            <person name="Guarin H."/>
            <person name="Kronmiller B."/>
            <person name="Pacleb J.M."/>
            <person name="Park S."/>
            <person name="Wan K.H."/>
            <person name="Rubin G.M."/>
            <person name="Celniker S.E."/>
        </authorList>
    </citation>
    <scope>NUCLEOTIDE SEQUENCE [LARGE SCALE MRNA] (ISOFORM A)</scope>
    <source>
        <strain>Berkeley</strain>
        <tissue>Head</tissue>
    </source>
</reference>
<reference key="5">
    <citation type="submission" date="2012-01" db="EMBL/GenBank/DDBJ databases">
        <authorList>
            <person name="Carlson J."/>
            <person name="Booth B."/>
            <person name="Frise E."/>
            <person name="Park S."/>
            <person name="Wan K."/>
            <person name="Yu C."/>
            <person name="Celniker S."/>
        </authorList>
    </citation>
    <scope>NUCLEOTIDE SEQUENCE [LARGE SCALE MRNA] (ISOFORMS A AND B)</scope>
    <source>
        <strain evidence="15 16 17">Berkeley</strain>
        <tissue evidence="15">Embryo</tissue>
        <tissue evidence="16">Head</tissue>
    </source>
</reference>
<reference key="6">
    <citation type="journal article" date="2007" name="EMBO J.">
        <title>SAGA and a novel Drosophila export complex anchor efficient transcription and mRNA export to NPC.</title>
        <authorList>
            <person name="Kurshakova M.M."/>
            <person name="Krasnov A.N."/>
            <person name="Kopytova D.V."/>
            <person name="Shidlovskii Y.V."/>
            <person name="Nikolenko J.V."/>
            <person name="Nabirochkina E.N."/>
            <person name="Spehner D."/>
            <person name="Schultz P."/>
            <person name="Tora L."/>
            <person name="Georgieva S.G."/>
        </authorList>
    </citation>
    <scope>FUNCTION</scope>
    <scope>IDENTIFICATION IN THE AMEX COMPLEX</scope>
    <scope>INTERACTION WITH E(Y)2</scope>
    <scope>SUBCELLULAR LOCATION</scope>
    <scope>DEVELOPMENTAL STAGE</scope>
</reference>
<reference key="7">
    <citation type="journal article" date="2016" name="Biochem. Mol. Biol. J.">
        <title>Orc3, A Subunit of Drosophila Pre-Replication Complex Directly Binds mRNA and Interacts with ENY2 Subunit of the TREX-2 mRNA Export Complex.</title>
        <authorList>
            <person name="Popova V."/>
            <person name="Georgieva S."/>
            <person name="Kopytova D."/>
        </authorList>
    </citation>
    <scope>INTERACTION WITH E(Y)2</scope>
    <scope>SUBCELLULAR LOCATION</scope>
</reference>
<reference key="8">
    <citation type="journal article" date="2016" name="Nucleic Acids Res.">
        <title>ORC interacts with THSC/TREX-2 and its subunits promote Nxf1 association with mRNP and mRNA export in Drosophila.</title>
        <authorList>
            <person name="Kopytova D."/>
            <person name="Popova V."/>
            <person name="Kurshakova M."/>
            <person name="Shidlovskii Y."/>
            <person name="Nabirochkina E."/>
            <person name="Brechalov A."/>
            <person name="Georgiev G."/>
            <person name="Georgieva S."/>
        </authorList>
    </citation>
    <scope>FUNCTION</scope>
    <scope>IDENTIFICATION IN THE AMEX COMPLEX</scope>
    <scope>SUBCELLULAR LOCATION</scope>
    <scope>DEVELOPMENTAL STAGE</scope>
</reference>
<reference key="9">
    <citation type="journal article" date="2017" name="Nucleic Acids Res.">
        <title>Piwi interacts with chromatin at nuclear pores and promiscuously binds nuclear transcripts in Drosophila ovarian somatic cells.</title>
        <authorList>
            <person name="Ilyin A.A."/>
            <person name="Ryazansky S.S."/>
            <person name="Doronin S.A."/>
            <person name="Olenkina O.M."/>
            <person name="Mikhaleva E.A."/>
            <person name="Yakushev E.Y."/>
            <person name="Abramov Y.A."/>
            <person name="Belyakin S.N."/>
            <person name="Ivankin A.V."/>
            <person name="Pindyurin A.V."/>
            <person name="Gvozdev V.A."/>
            <person name="Klenov M.S."/>
            <person name="Shevelyov Y.Y."/>
        </authorList>
    </citation>
    <scope>INTERACTION WITH PIWI</scope>
    <scope>SUBCELLULAR LOCATION</scope>
    <scope>TISSUE SPECIFICITY</scope>
</reference>
<reference key="10">
    <citation type="journal article" date="2018" name="Dokl. Biochem. Biophys.">
        <title>Alternative Splicing of the Xmas mRNA Encoding the mRNA Export Protein in Drosophila melanogaster.</title>
        <authorList>
            <person name="Kopytova D.V."/>
            <person name="Il'in Y.V."/>
            <person name="Nabirochkina E.N."/>
        </authorList>
    </citation>
    <scope>SUBCELLULAR LOCATION</scope>
    <scope>TISSUE SPECIFICITY</scope>
    <scope>DEVELOPMENTAL STAGE</scope>
</reference>
<reference key="11">
    <citation type="journal article" date="2021" name="Dokl. Biochem. Biophys.">
        <title>Study of the Interaction between Xmas-2, the Main Protein of TREX-2 mRNA Export Complex, and the Orc3 Protein, a Subunit of ORC Complex of D. melanogaster.</title>
        <authorList>
            <person name="Kurshakova M.M."/>
            <person name="Kopytova D.V."/>
            <person name="Georgieva S.G."/>
        </authorList>
    </citation>
    <scope>INTERACTION WITH ORC3</scope>
    <scope>MUTAGENESIS OF 1-MET--PRO-252; 1-MET--SER-339; 1-MET--ALA-672; 1-MET--LYS-834 AND 671-ILE--ALA-1359</scope>
</reference>
<reference key="12">
    <citation type="journal article" date="2021" name="RNA Biol.">
        <title>PCID2, a subunit of the Drosophila TREX-2 nuclear export complex, is essential for both mRNA nuclear export and its subsequent cytoplasmic trafficking.</title>
        <authorList>
            <person name="Glukhova A.A."/>
            <person name="Kurshakova M.M."/>
            <person name="Nabirochkina E.N."/>
            <person name="Georgieva S.G."/>
            <person name="Kopytova D.V."/>
        </authorList>
    </citation>
    <scope>FUNCTION</scope>
    <scope>SUBCELLULAR LOCATION</scope>
</reference>
<name>XMAS_DROME</name>
<protein>
    <recommendedName>
        <fullName evidence="11">Protein xmas</fullName>
    </recommendedName>
</protein>
<proteinExistence type="evidence at protein level"/>
<sequence length="2079" mass="239476">MAEPRPGGYNYKTLLCRNIPELFLDKYVARSHFGRFGTLVNFVLRPRRMTCTVSYASEDEAARALLDGASFQGHLFDISYADNETAPAQKTEEWVDPDIQAELSALQSGWRNEYGSGKPIKKPQNGSSGSGGSSMLPAIPVGPATAPVSRDRTPAQLRDLENMMRRPAHTSEEKFSVLDARDKLLRLNRTQHKLSGATQGHCADMCPEKERVLREFQRQVAYYELQPGSDELICHERALKQYSRSSADQETPLPHELRNETALHMTMSYLMHEIMDISERQDPQSHMGDWFHFVWDRTRSIRKEITQQELCSLGAVKLVEQCARFHIHCAARLVDADPSVFDSKINAENLTKCLQTLKYMYHDLRIKGVPCPKEAEFRGYIVLLNLADANFLWDIGQLPAELQSCPEVRQAIQFYLALQDTNFVRFFQLLADKDTSYLSACILVNYFTRLRVLGLHRLIQAYRSPRKDEVSSLPLSYIAELLSFASEQEAADFVQHYGLQINEAGRVVLSRMHTVETEYKLPRQYELVEVKRVKSVGEVVSGEPLPPRDLYLNHRPHNSFDDYGMLKSIAWTAKDQLAGMQQEEMQPQMPSQPPAVSKHSDTLFKVPMQPDGTAAGFGVFAAAAVPPASSIDGFSFVLPKSRAQEFQEQAPATQQRRAQEEAKHQALQVAIAAAKKREAELMAIHEAKVAEAERVRQQKLRERQEQQRRQQQELEEQRQREQEKLQLEKERQLKLEQLFFVQQQEREAHKQTRTLELYQEIFQDTLAEICQSEFMSHSRACRSYESMLDSITRDLVERQMEQSIYELGVMRVCIRRWRKYRRTQQEKDTLFNQLPLSFGAENPEGVVNKRSMEDSLRLSRRYRLGEPCDYGKLLAGLEEHSWLKLDLWHVLDKCLPVAQPGARRFYKLLISLSGGQEGLQLNCDLDRGLLQQPQSPDARFVDGGYIRGFSQGIGLSVMKIRDDDHDWKATDLAEANGIICLIGLDDIRLLPDRLKPLLQASRCHDVAVIVQHPANTAFVQPDIPLQELCLRSFNIFRLRKSGNNRQRLMIALESAVKFLAKATERKRVGHLHQVETREYLLVNLGSELFRRLKYAAEHDTAIRSDTQLNPQRCVDLFNEAVHRLQLVAGEDLSDWPQFPEELRVFVQPLPIESSLNTNRLEHFEPGWHLPERRQRIVQLLERCKLPKMPVLPRSSSLAEAQCQWVLDYAQISQQEDCVEQIALQAIKILQYDTDDYLNFVEYLAGERMQYILRQERNPPQGIVYNTKTLKRRFLSAWYYEFREPQIYEPVPAEENAQMLEKQPSSQAEVQQLDFDEITSKAEAVLKRFHQRQDERHTLRELNRSHKSRKRRDASDHKHAMSSLVSALKAARSDYQGKSSAVCRLVAQMVEADQVKYQWTPNLTSLIDRKDASTRHQWRPHVNHSTRHARKLPVQSISFLSRCLAKKGEHAGLTSCVLSVKTRYAPKTLHGRELLIWRQSSMRPLLLPSSNLWTGVLSKRHYVPRLRPAEEDEEVERRAVPQLRITKEQSEEEEHQLQRRKDGSRLRNECSEFYLPMGEQDYSEREEENRGHRQAYVPSELMTPELATKWQTTSVTDRDRQLLNLEQQMKTQPSVRMTTQTWFSGNHRRYRSRRSGAKRYHVVSELEGWRRSSNHQPVPVFQGQPGEQEHLRHASHKASARSMPDGQERCQMVWEQKKRSPWHRTEVTNSNKVRMPRIRAAKSAVMMAQEARNKHHRLITKKLVYRPRRTVNAVQAEETEDQDTHHRHHGGGQKMSKRAPERALLKQHLADLLAVSKPEDSFRIGYQPNAPTRQLLEQGKCYVSLRREQFIHLHPVRPNSLILAVNLEVKESPRQPVTTLHRRDGAKRPRLVEDVVKPSLITVIRQSAATWDHNGRKVPAKKSNLVGMPSKEHAYQRRLVRNTSTLEAIVKAQAKPRSEPKSPSSATDYHRVASQKLPHVTSKADISKAADPFKDLDKPRIKEKEVASSWKQAYVVRSKMYDAITPYRRRAYPGKKCITKDKTDGYFLAKRSSAAAAGSSKKVKPPKQPVVSPKVQVPSVLHKKKSRESLGPQTTKTGKL</sequence>
<organism>
    <name type="scientific">Drosophila melanogaster</name>
    <name type="common">Fruit fly</name>
    <dbReference type="NCBI Taxonomy" id="7227"/>
    <lineage>
        <taxon>Eukaryota</taxon>
        <taxon>Metazoa</taxon>
        <taxon>Ecdysozoa</taxon>
        <taxon>Arthropoda</taxon>
        <taxon>Hexapoda</taxon>
        <taxon>Insecta</taxon>
        <taxon>Pterygota</taxon>
        <taxon>Neoptera</taxon>
        <taxon>Endopterygota</taxon>
        <taxon>Diptera</taxon>
        <taxon>Brachycera</taxon>
        <taxon>Muscomorpha</taxon>
        <taxon>Ephydroidea</taxon>
        <taxon>Drosophilidae</taxon>
        <taxon>Drosophila</taxon>
        <taxon>Sophophora</taxon>
    </lineage>
</organism>
<accession>Q9U3V9</accession>
<accession>A0A4D6K557</accession>
<accession>C9QP61</accession>
<accession>D0IQ87</accession>
<accession>H1UUM5</accession>
<accession>Q8IR02</accession>
<accession>Q8MQS3</accession>
<accession>Q9U3V8</accession>
<accession>Q9VX76</accession>
<feature type="chain" id="PRO_0000082006" description="Protein xmas">
    <location>
        <begin position="1"/>
        <end position="2079"/>
    </location>
</feature>
<feature type="domain" description="RRM" evidence="1">
    <location>
        <begin position="12"/>
        <end position="83"/>
    </location>
</feature>
<feature type="domain" description="PCI" evidence="2">
    <location>
        <begin position="342"/>
        <end position="525"/>
    </location>
</feature>
<feature type="region of interest" description="Disordered" evidence="3">
    <location>
        <begin position="112"/>
        <end position="152"/>
    </location>
</feature>
<feature type="region of interest" description="Sufficient for Orc3 binding" evidence="9">
    <location>
        <begin position="835"/>
        <end position="1359"/>
    </location>
</feature>
<feature type="region of interest" description="Disordered" evidence="3">
    <location>
        <begin position="1335"/>
        <end position="1360"/>
    </location>
</feature>
<feature type="region of interest" description="Disordered" evidence="3">
    <location>
        <begin position="1755"/>
        <end position="1778"/>
    </location>
</feature>
<feature type="region of interest" description="Disordered" evidence="3">
    <location>
        <begin position="1930"/>
        <end position="1963"/>
    </location>
</feature>
<feature type="region of interest" description="Disordered" evidence="3">
    <location>
        <begin position="2032"/>
        <end position="2079"/>
    </location>
</feature>
<feature type="compositionally biased region" description="Basic residues" evidence="3">
    <location>
        <begin position="1764"/>
        <end position="1776"/>
    </location>
</feature>
<feature type="compositionally biased region" description="Low complexity" evidence="3">
    <location>
        <begin position="2048"/>
        <end position="2059"/>
    </location>
</feature>
<feature type="compositionally biased region" description="Polar residues" evidence="3">
    <location>
        <begin position="2070"/>
        <end position="2079"/>
    </location>
</feature>
<feature type="splice variant" id="VSP_061530" description="In isoform B." evidence="12">
    <original>MAEPRPGGYNYKTLLCRNIPELFLDKYVARSHFGRFGTLVNFVLRPRRMTCTVSYASEDEAARALLDGASFQGHLFDISYADNETAPAQKTEEWVDPDIQAELSALQSGWRNEYGSGKPIKKPQNGSSGSGGSSMLPAIPVGPATAPVSRDRTPAQLRDLENMMRRPAHTSEEKFSVLDARDKLLRLNRTQHKLSGATQGHCADMCPEKERVLREFQRQVAYYELQPGSDELICHERALKQYSRSSADQETPLPHELRNETALHMTMSYLMHEIMDISERQDPQSHMGDWFHFVWDRTRSIRKEITQQELCSLGAVKLVEQCARFHIHCAARLVDADPSVFDSKINAENLTKCLQTLKYMYHDLRIKGVPCPKEAEFRGYIVLLNLADANFLWDIGQLPAELQSCPEVRQAIQFYLALQDTNFVRFFQLLADKDTSYLSACILVNYFTRLRVLGLHRLIQAYRSPRKDEVSSLPLSYIAELLSFASEQEAADFVQHYGLQINEAGRVVLSRMHTVETEYKLPRQYELVEVKRVKSVGEVVSGEPLPPRDLYLNHRPHNSFDDYGMLKSIAWTAKDQLAGMQQEEMQPQMPSQPPAVSKHSDTLFKVPMQPDGTAAGFGVFAAAAVPPASSIDGFSFVLPKSRAQEFQEQAPATQQRRAQEEAKHQALQVAIAAAKKREAELMAIHEAKVAEAERVRQQKLRERQEQQRRQQQELEEQRQREQEKLQLEKERQLKLEQLFFVQQQEREAHKQTRTLELYQEIFQDTLAEICQSEFMSHSRACRSYESMLDSITRDLVERQMEQSIYELGVMRVCIRRWRKYRRTQQEKDTLFNQLPLSFGAENPEGVVNKRSMEDSLRLSRRYRLGEPCDYGKLLAGLEEHSWLKLDLWHVLDKCLPVAQPGARRFYKLLISLSGGQEGLQLNCDLDRGLLQQPQSPDARFVDGGYIRGFSQGIGLSVMKIRDDDHDWKATDLAEANGIICLIGLDDIRLLPDRLKPLLQASRCHDVAVIVQHPANTAFVQPDIPLQELCLRSFNIFRLRKSGNNRQRLMIALESAVKFLAKATERKRVGHLHQVETREYLLVNLGSELFRRLKYAAEHDTAIRSDTQLNPQRCVDLFNEAVHRLQLVAGEDLSDWPQFPEELRVFVQPLPIESSLNTNRLEHFEPGWHLPERRQRIVQLLERCKLPKMPVLPRSSSLAEAQCQWVLDYAQISQQEDCVEQIALQAIKILQYDTDDYLNFVEYLAGERMQYILRQERNPPQGIVYNTKTLKRRFLSAWYYEFREPQIYEPVPAEENAQMLEKQPSSQAEVQQLDFDEITSKAEAVLKRFHQRQDERHTLRELNRSHKSRKRRDASDHKHAM</original>
    <variation>MKSLVAQTECQLRPLKV</variation>
    <location>
        <begin position="1"/>
        <end position="1360"/>
    </location>
</feature>
<feature type="splice variant" id="VSP_061531" description="In isoform A." evidence="12">
    <original>MSSLVSALKAA</original>
    <variation>SKHKRKRSKSK</variation>
    <location>
        <begin position="1360"/>
        <end position="1370"/>
    </location>
</feature>
<feature type="splice variant" id="VSP_061532" description="In isoform A." evidence="12">
    <location>
        <begin position="1371"/>
        <end position="2079"/>
    </location>
</feature>
<feature type="mutagenesis site" description="In xmas-2-dCID; no effect on interaction with Orc3." evidence="9">
    <location>
        <begin position="1"/>
        <end position="834"/>
    </location>
</feature>
<feature type="mutagenesis site" description="In xmas-2-C; no effect on interaction with Orc3." evidence="9">
    <location>
        <begin position="1"/>
        <end position="672"/>
    </location>
</feature>
<feature type="mutagenesis site" description="In xmas-2-dM; no effect on interaction with Orc3." evidence="9">
    <location>
        <begin position="1"/>
        <end position="339"/>
    </location>
</feature>
<feature type="mutagenesis site" description="In xmas-2-dRRM; no effect on interaction with Orc3." evidence="9">
    <location>
        <begin position="1"/>
        <end position="252"/>
    </location>
</feature>
<feature type="mutagenesis site" description="In xmas-2-N; abolishes interaction with Orc3." evidence="9">
    <location>
        <begin position="671"/>
        <end position="1359"/>
    </location>
</feature>
<feature type="sequence conflict" description="In Ref. 1; AAF23815." evidence="13" ref="1">
    <location>
        <begin position="96"/>
        <end position="281"/>
    </location>
</feature>
<feature type="sequence conflict" description="In Ref. 5; ACX36519." evidence="13" ref="5">
    <original>A</original>
    <variation>D</variation>
    <location>
        <position position="238"/>
    </location>
</feature>
<feature type="sequence conflict" description="In Ref. 1; AAF23815." evidence="13" ref="1">
    <original>S</original>
    <variation>N</variation>
    <location>
        <position position="778"/>
    </location>
</feature>
<feature type="sequence conflict" description="In Ref. 1; AAF23815." evidence="13" ref="1">
    <original>ESM</original>
    <variation>VSV</variation>
    <location>
        <begin position="785"/>
        <end position="787"/>
    </location>
</feature>
<feature type="sequence conflict" description="In Ref. 1; AAF23815." evidence="13" ref="1">
    <original>D</original>
    <variation>E</variation>
    <location>
        <position position="942"/>
    </location>
</feature>
<feature type="sequence conflict" description="In Ref. 1; AAF23815." evidence="13" ref="1">
    <original>E</original>
    <variation>K</variation>
    <location>
        <position position="1027"/>
    </location>
</feature>
<feature type="sequence conflict" description="In Ref. 1; AAF23815." evidence="13" ref="1">
    <original>C</original>
    <variation>Y</variation>
    <location>
        <position position="1217"/>
    </location>
</feature>
<feature type="sequence conflict" description="In Ref. 1; AAF23815." evidence="13" ref="1">
    <original>I</original>
    <variation>V</variation>
    <location>
        <position position="1262"/>
    </location>
</feature>
<feature type="sequence conflict" description="In Ref. 4; AAM75010." evidence="13" ref="4">
    <original>S</original>
    <variation>T</variation>
    <location>
        <position position="1275"/>
    </location>
</feature>
<feature type="sequence conflict" description="In Ref. 1; AAF23815." evidence="13" ref="1">
    <original>K</original>
    <variation>E</variation>
    <location>
        <position position="1301"/>
    </location>
</feature>
<feature type="sequence conflict" description="In Ref. 1; AAF23814." evidence="13" ref="1">
    <original>A</original>
    <variation>P</variation>
    <location>
        <position position="1574"/>
    </location>
</feature>
<feature type="sequence conflict" description="In Ref. 5; ACX85646." evidence="13" ref="5">
    <location>
        <position position="1854"/>
    </location>
</feature>
<evidence type="ECO:0000255" key="1">
    <source>
        <dbReference type="PROSITE-ProRule" id="PRU00176"/>
    </source>
</evidence>
<evidence type="ECO:0000255" key="2">
    <source>
        <dbReference type="PROSITE-ProRule" id="PRU01185"/>
    </source>
</evidence>
<evidence type="ECO:0000256" key="3">
    <source>
        <dbReference type="SAM" id="MobiDB-lite"/>
    </source>
</evidence>
<evidence type="ECO:0000269" key="4">
    <source>
    </source>
</evidence>
<evidence type="ECO:0000269" key="5">
    <source>
    </source>
</evidence>
<evidence type="ECO:0000269" key="6">
    <source>
    </source>
</evidence>
<evidence type="ECO:0000269" key="7">
    <source>
    </source>
</evidence>
<evidence type="ECO:0000269" key="8">
    <source>
    </source>
</evidence>
<evidence type="ECO:0000269" key="9">
    <source>
    </source>
</evidence>
<evidence type="ECO:0000269" key="10">
    <source ref="7"/>
</evidence>
<evidence type="ECO:0000303" key="11">
    <source>
    </source>
</evidence>
<evidence type="ECO:0000303" key="12">
    <source ref="1"/>
</evidence>
<evidence type="ECO:0000305" key="13"/>
<evidence type="ECO:0000305" key="14">
    <source>
    </source>
</evidence>
<evidence type="ECO:0000312" key="15">
    <source>
        <dbReference type="EMBL" id="ACX36519.1"/>
    </source>
</evidence>
<evidence type="ECO:0000312" key="16">
    <source>
        <dbReference type="EMBL" id="ACX85646.1"/>
    </source>
</evidence>
<evidence type="ECO:0000312" key="17">
    <source>
        <dbReference type="EMBL" id="AEX98030.1"/>
    </source>
</evidence>
<evidence type="ECO:0000312" key="18">
    <source>
        <dbReference type="FlyBase" id="FBgn0286809"/>
    </source>
</evidence>